<reference key="1">
    <citation type="journal article" date="2008" name="J. Bacteriol.">
        <title>Genome sequence of Staphylococcus aureus strain Newman and comparative analysis of staphylococcal genomes: polymorphism and evolution of two major pathogenicity islands.</title>
        <authorList>
            <person name="Baba T."/>
            <person name="Bae T."/>
            <person name="Schneewind O."/>
            <person name="Takeuchi F."/>
            <person name="Hiramatsu K."/>
        </authorList>
    </citation>
    <scope>NUCLEOTIDE SEQUENCE [LARGE SCALE GENOMIC DNA]</scope>
    <source>
        <strain>Newman</strain>
    </source>
</reference>
<reference key="2">
    <citation type="journal article" date="2005" name="Infect. Immun.">
        <title>Rat/MgrA, a regulator of autolysis, is a regulator of virulence genes in Staphylococcus aureus.</title>
        <authorList>
            <person name="Ingavale S.S."/>
            <person name="van Wamel W."/>
            <person name="Luong T.T."/>
            <person name="Lee C.Y."/>
            <person name="Cheung A.L."/>
        </authorList>
    </citation>
    <scope>REGULATION BY MGRA</scope>
</reference>
<dbReference type="EMBL" id="AP009351">
    <property type="protein sequence ID" value="BAF66328.1"/>
    <property type="status" value="ALT_INIT"/>
    <property type="molecule type" value="Genomic_DNA"/>
</dbReference>
<dbReference type="RefSeq" id="WP_000876756.1">
    <property type="nucleotide sequence ID" value="NZ_JBBIAE010000007.1"/>
</dbReference>
<dbReference type="SMR" id="A6QD96"/>
<dbReference type="KEGG" id="sae:NWMN_0056"/>
<dbReference type="HOGENOM" id="CLU_097164_0_0_9"/>
<dbReference type="Proteomes" id="UP000006386">
    <property type="component" value="Chromosome"/>
</dbReference>
<dbReference type="GO" id="GO:0005737">
    <property type="term" value="C:cytoplasm"/>
    <property type="evidence" value="ECO:0007669"/>
    <property type="project" value="UniProtKB-SubCell"/>
</dbReference>
<dbReference type="GO" id="GO:0003677">
    <property type="term" value="F:DNA binding"/>
    <property type="evidence" value="ECO:0007669"/>
    <property type="project" value="UniProtKB-KW"/>
</dbReference>
<dbReference type="GO" id="GO:0003700">
    <property type="term" value="F:DNA-binding transcription factor activity"/>
    <property type="evidence" value="ECO:0007669"/>
    <property type="project" value="InterPro"/>
</dbReference>
<dbReference type="GO" id="GO:0006950">
    <property type="term" value="P:response to stress"/>
    <property type="evidence" value="ECO:0007669"/>
    <property type="project" value="TreeGrafter"/>
</dbReference>
<dbReference type="Gene3D" id="1.10.10.10">
    <property type="entry name" value="Winged helix-like DNA-binding domain superfamily/Winged helix DNA-binding domain"/>
    <property type="match status" value="2"/>
</dbReference>
<dbReference type="InterPro" id="IPR000835">
    <property type="entry name" value="HTH_MarR-typ"/>
</dbReference>
<dbReference type="InterPro" id="IPR039422">
    <property type="entry name" value="MarR/SlyA-like"/>
</dbReference>
<dbReference type="InterPro" id="IPR010166">
    <property type="entry name" value="SarA/Rot_dom"/>
</dbReference>
<dbReference type="InterPro" id="IPR055166">
    <property type="entry name" value="Transc_reg_Sar_Rot_HTH"/>
</dbReference>
<dbReference type="InterPro" id="IPR036388">
    <property type="entry name" value="WH-like_DNA-bd_sf"/>
</dbReference>
<dbReference type="InterPro" id="IPR036390">
    <property type="entry name" value="WH_DNA-bd_sf"/>
</dbReference>
<dbReference type="NCBIfam" id="TIGR01889">
    <property type="entry name" value="Staph_reg_Sar"/>
    <property type="match status" value="2"/>
</dbReference>
<dbReference type="PANTHER" id="PTHR33164:SF5">
    <property type="entry name" value="ORGANIC HYDROPEROXIDE RESISTANCE TRANSCRIPTIONAL REGULATOR"/>
    <property type="match status" value="1"/>
</dbReference>
<dbReference type="PANTHER" id="PTHR33164">
    <property type="entry name" value="TRANSCRIPTIONAL REGULATOR, MARR FAMILY"/>
    <property type="match status" value="1"/>
</dbReference>
<dbReference type="Pfam" id="PF22381">
    <property type="entry name" value="Staph_reg_Sar_Rot"/>
    <property type="match status" value="2"/>
</dbReference>
<dbReference type="SMART" id="SM00347">
    <property type="entry name" value="HTH_MARR"/>
    <property type="match status" value="2"/>
</dbReference>
<dbReference type="SUPFAM" id="SSF46785">
    <property type="entry name" value="Winged helix' DNA-binding domain"/>
    <property type="match status" value="2"/>
</dbReference>
<keyword id="KW-0963">Cytoplasm</keyword>
<keyword id="KW-0238">DNA-binding</keyword>
<keyword id="KW-0804">Transcription</keyword>
<keyword id="KW-0805">Transcription regulation</keyword>
<evidence type="ECO:0000250" key="1"/>
<evidence type="ECO:0000255" key="2"/>
<evidence type="ECO:0000305" key="3"/>
<comment type="function">
    <text evidence="1">Transcriptional regulator that controls expression of some virulence factors in a cell density-dependent manner.</text>
</comment>
<comment type="subcellular location">
    <subcellularLocation>
        <location evidence="1">Cytoplasm</location>
    </subcellularLocation>
</comment>
<comment type="induction">
    <text evidence="1">Expressed at the early exponential growth phase, decreases through exponential phase and reaches a steady-state level at post-exponential phase. Repressed by MgrA and SarA. Activated by Rot and SarT. Transcription is also dependent on SigA and SigB factors. Is activated by SigB in strains harboring an intact sigB operon (rsbU, rsbV, rsbW, and sigB) (By similarity).</text>
</comment>
<comment type="similarity">
    <text evidence="3">Belongs to the SarA family.</text>
</comment>
<comment type="sequence caution" evidence="3">
    <conflict type="erroneous initiation">
        <sequence resource="EMBL-CDS" id="BAF66328"/>
    </conflict>
</comment>
<gene>
    <name type="primary">sarS</name>
    <name type="ordered locus">NWMN_0056</name>
</gene>
<organism>
    <name type="scientific">Staphylococcus aureus (strain Newman)</name>
    <dbReference type="NCBI Taxonomy" id="426430"/>
    <lineage>
        <taxon>Bacteria</taxon>
        <taxon>Bacillati</taxon>
        <taxon>Bacillota</taxon>
        <taxon>Bacilli</taxon>
        <taxon>Bacillales</taxon>
        <taxon>Staphylococcaceae</taxon>
        <taxon>Staphylococcus</taxon>
    </lineage>
</organism>
<proteinExistence type="inferred from homology"/>
<feature type="chain" id="PRO_0000324107" description="HTH-type transcriptional regulator SarS">
    <location>
        <begin position="1"/>
        <end position="250"/>
    </location>
</feature>
<feature type="DNA-binding region" description="H-T-H motif" evidence="2">
    <location>
        <begin position="53"/>
        <end position="76"/>
    </location>
</feature>
<feature type="DNA-binding region" description="H-T-H motif" evidence="2">
    <location>
        <begin position="177"/>
        <end position="200"/>
    </location>
</feature>
<protein>
    <recommendedName>
        <fullName>HTH-type transcriptional regulator SarS</fullName>
    </recommendedName>
    <alternativeName>
        <fullName>Staphylococcal accessory regulator S</fullName>
    </alternativeName>
</protein>
<name>SARS_STAAE</name>
<accession>A6QD96</accession>
<sequence length="250" mass="29890">MKYNNHDKIRDFIIIEAYMFRFKKKVKPEVDMTIKEFILLTYLFHQQENTLPFKKIVSDLCYKQSDLVQHIKVLVKHSYISKVRSKIDERNTYISISEEQREKIAERVTLFDQIIKQFNLADQSESQMIPKDSKEFLNLMMYTMYFKNIIKKHLTLSFVEFTILAIITSQNKNIVLLKDLIETIHHKYPQTVRALNNLKKQGYLIKERSTEDERKILIHMDDAQQDHAEQLLAQVNQLLADKDHLHLVFE</sequence>